<dbReference type="EC" id="2.7.7.6" evidence="1"/>
<dbReference type="EMBL" id="CP000932">
    <property type="protein sequence ID" value="ACM63802.1"/>
    <property type="molecule type" value="Genomic_DNA"/>
</dbReference>
<dbReference type="RefSeq" id="WP_012661185.1">
    <property type="nucleotide sequence ID" value="NC_012039.1"/>
</dbReference>
<dbReference type="SMR" id="B9KFG7"/>
<dbReference type="STRING" id="306263.Cla_0449"/>
<dbReference type="KEGG" id="cla:CLA_0449"/>
<dbReference type="PATRIC" id="fig|306263.5.peg.446"/>
<dbReference type="eggNOG" id="COG0085">
    <property type="taxonomic scope" value="Bacteria"/>
</dbReference>
<dbReference type="HOGENOM" id="CLU_000524_4_0_7"/>
<dbReference type="Proteomes" id="UP000007727">
    <property type="component" value="Chromosome"/>
</dbReference>
<dbReference type="GO" id="GO:0000428">
    <property type="term" value="C:DNA-directed RNA polymerase complex"/>
    <property type="evidence" value="ECO:0007669"/>
    <property type="project" value="UniProtKB-KW"/>
</dbReference>
<dbReference type="GO" id="GO:0003677">
    <property type="term" value="F:DNA binding"/>
    <property type="evidence" value="ECO:0007669"/>
    <property type="project" value="UniProtKB-UniRule"/>
</dbReference>
<dbReference type="GO" id="GO:0003899">
    <property type="term" value="F:DNA-directed RNA polymerase activity"/>
    <property type="evidence" value="ECO:0007669"/>
    <property type="project" value="UniProtKB-UniRule"/>
</dbReference>
<dbReference type="GO" id="GO:0032549">
    <property type="term" value="F:ribonucleoside binding"/>
    <property type="evidence" value="ECO:0007669"/>
    <property type="project" value="InterPro"/>
</dbReference>
<dbReference type="GO" id="GO:0006351">
    <property type="term" value="P:DNA-templated transcription"/>
    <property type="evidence" value="ECO:0007669"/>
    <property type="project" value="UniProtKB-UniRule"/>
</dbReference>
<dbReference type="CDD" id="cd00653">
    <property type="entry name" value="RNA_pol_B_RPB2"/>
    <property type="match status" value="1"/>
</dbReference>
<dbReference type="Gene3D" id="2.40.50.100">
    <property type="match status" value="1"/>
</dbReference>
<dbReference type="Gene3D" id="2.40.50.150">
    <property type="match status" value="1"/>
</dbReference>
<dbReference type="Gene3D" id="3.90.1100.10">
    <property type="match status" value="2"/>
</dbReference>
<dbReference type="Gene3D" id="2.30.150.10">
    <property type="entry name" value="DNA-directed RNA polymerase, beta subunit, external 1 domain"/>
    <property type="match status" value="1"/>
</dbReference>
<dbReference type="Gene3D" id="2.40.270.10">
    <property type="entry name" value="DNA-directed RNA polymerase, subunit 2, domain 6"/>
    <property type="match status" value="2"/>
</dbReference>
<dbReference type="Gene3D" id="3.90.1800.10">
    <property type="entry name" value="RNA polymerase alpha subunit dimerisation domain"/>
    <property type="match status" value="1"/>
</dbReference>
<dbReference type="Gene3D" id="3.90.1110.10">
    <property type="entry name" value="RNA polymerase Rpb2, domain 2"/>
    <property type="match status" value="2"/>
</dbReference>
<dbReference type="HAMAP" id="MF_01321">
    <property type="entry name" value="RNApol_bact_RpoB"/>
    <property type="match status" value="1"/>
</dbReference>
<dbReference type="InterPro" id="IPR042107">
    <property type="entry name" value="DNA-dir_RNA_pol_bsu_ext_1_sf"/>
</dbReference>
<dbReference type="InterPro" id="IPR019462">
    <property type="entry name" value="DNA-dir_RNA_pol_bsu_external_1"/>
</dbReference>
<dbReference type="InterPro" id="IPR015712">
    <property type="entry name" value="DNA-dir_RNA_pol_su2"/>
</dbReference>
<dbReference type="InterPro" id="IPR007120">
    <property type="entry name" value="DNA-dir_RNAP_su2_dom"/>
</dbReference>
<dbReference type="InterPro" id="IPR037033">
    <property type="entry name" value="DNA-dir_RNAP_su2_hyb_sf"/>
</dbReference>
<dbReference type="InterPro" id="IPR010243">
    <property type="entry name" value="RNA_pol_bsu_bac"/>
</dbReference>
<dbReference type="InterPro" id="IPR007121">
    <property type="entry name" value="RNA_pol_bsu_CS"/>
</dbReference>
<dbReference type="InterPro" id="IPR007644">
    <property type="entry name" value="RNA_pol_bsu_protrusion"/>
</dbReference>
<dbReference type="InterPro" id="IPR007642">
    <property type="entry name" value="RNA_pol_Rpb2_2"/>
</dbReference>
<dbReference type="InterPro" id="IPR037034">
    <property type="entry name" value="RNA_pol_Rpb2_2_sf"/>
</dbReference>
<dbReference type="InterPro" id="IPR007645">
    <property type="entry name" value="RNA_pol_Rpb2_3"/>
</dbReference>
<dbReference type="InterPro" id="IPR007641">
    <property type="entry name" value="RNA_pol_Rpb2_7"/>
</dbReference>
<dbReference type="InterPro" id="IPR014724">
    <property type="entry name" value="RNA_pol_RPB2_OB-fold"/>
</dbReference>
<dbReference type="NCBIfam" id="NF001616">
    <property type="entry name" value="PRK00405.1"/>
    <property type="match status" value="1"/>
</dbReference>
<dbReference type="NCBIfam" id="TIGR02013">
    <property type="entry name" value="rpoB"/>
    <property type="match status" value="1"/>
</dbReference>
<dbReference type="PANTHER" id="PTHR20856">
    <property type="entry name" value="DNA-DIRECTED RNA POLYMERASE I SUBUNIT 2"/>
    <property type="match status" value="1"/>
</dbReference>
<dbReference type="Pfam" id="PF04563">
    <property type="entry name" value="RNA_pol_Rpb2_1"/>
    <property type="match status" value="1"/>
</dbReference>
<dbReference type="Pfam" id="PF04561">
    <property type="entry name" value="RNA_pol_Rpb2_2"/>
    <property type="match status" value="2"/>
</dbReference>
<dbReference type="Pfam" id="PF04565">
    <property type="entry name" value="RNA_pol_Rpb2_3"/>
    <property type="match status" value="1"/>
</dbReference>
<dbReference type="Pfam" id="PF10385">
    <property type="entry name" value="RNA_pol_Rpb2_45"/>
    <property type="match status" value="1"/>
</dbReference>
<dbReference type="Pfam" id="PF00562">
    <property type="entry name" value="RNA_pol_Rpb2_6"/>
    <property type="match status" value="1"/>
</dbReference>
<dbReference type="Pfam" id="PF04560">
    <property type="entry name" value="RNA_pol_Rpb2_7"/>
    <property type="match status" value="1"/>
</dbReference>
<dbReference type="SUPFAM" id="SSF64484">
    <property type="entry name" value="beta and beta-prime subunits of DNA dependent RNA-polymerase"/>
    <property type="match status" value="1"/>
</dbReference>
<dbReference type="PROSITE" id="PS01166">
    <property type="entry name" value="RNA_POL_BETA"/>
    <property type="match status" value="1"/>
</dbReference>
<feature type="chain" id="PRO_1000165796" description="DNA-directed RNA polymerase subunit beta">
    <location>
        <begin position="1"/>
        <end position="1377"/>
    </location>
</feature>
<gene>
    <name evidence="1" type="primary">rpoB</name>
    <name type="ordered locus">Cla_0449</name>
</gene>
<organism>
    <name type="scientific">Campylobacter lari (strain RM2100 / D67 / ATCC BAA-1060)</name>
    <dbReference type="NCBI Taxonomy" id="306263"/>
    <lineage>
        <taxon>Bacteria</taxon>
        <taxon>Pseudomonadati</taxon>
        <taxon>Campylobacterota</taxon>
        <taxon>Epsilonproteobacteria</taxon>
        <taxon>Campylobacterales</taxon>
        <taxon>Campylobacteraceae</taxon>
        <taxon>Campylobacter</taxon>
    </lineage>
</organism>
<keyword id="KW-0240">DNA-directed RNA polymerase</keyword>
<keyword id="KW-0548">Nucleotidyltransferase</keyword>
<keyword id="KW-1185">Reference proteome</keyword>
<keyword id="KW-0804">Transcription</keyword>
<keyword id="KW-0808">Transferase</keyword>
<accession>B9KFG7</accession>
<evidence type="ECO:0000255" key="1">
    <source>
        <dbReference type="HAMAP-Rule" id="MF_01321"/>
    </source>
</evidence>
<reference key="1">
    <citation type="journal article" date="2008" name="Foodborne Pathog. Dis.">
        <title>The complete genome sequence and analysis of the human pathogen Campylobacter lari.</title>
        <authorList>
            <person name="Miller W.G."/>
            <person name="Wang G."/>
            <person name="Binnewies T.T."/>
            <person name="Parker C.T."/>
        </authorList>
    </citation>
    <scope>NUCLEOTIDE SEQUENCE [LARGE SCALE GENOMIC DNA]</scope>
    <source>
        <strain>RM2100 / D67 / ATCC BAA-1060</strain>
    </source>
</reference>
<name>RPOB_CAMLR</name>
<protein>
    <recommendedName>
        <fullName evidence="1">DNA-directed RNA polymerase subunit beta</fullName>
        <shortName evidence="1">RNAP subunit beta</shortName>
        <ecNumber evidence="1">2.7.7.6</ecNumber>
    </recommendedName>
    <alternativeName>
        <fullName evidence="1">RNA polymerase subunit beta</fullName>
    </alternativeName>
    <alternativeName>
        <fullName evidence="1">Transcriptase subunit beta</fullName>
    </alternativeName>
</protein>
<proteinExistence type="inferred from homology"/>
<comment type="function">
    <text evidence="1">DNA-dependent RNA polymerase catalyzes the transcription of DNA into RNA using the four ribonucleoside triphosphates as substrates.</text>
</comment>
<comment type="catalytic activity">
    <reaction evidence="1">
        <text>RNA(n) + a ribonucleoside 5'-triphosphate = RNA(n+1) + diphosphate</text>
        <dbReference type="Rhea" id="RHEA:21248"/>
        <dbReference type="Rhea" id="RHEA-COMP:14527"/>
        <dbReference type="Rhea" id="RHEA-COMP:17342"/>
        <dbReference type="ChEBI" id="CHEBI:33019"/>
        <dbReference type="ChEBI" id="CHEBI:61557"/>
        <dbReference type="ChEBI" id="CHEBI:140395"/>
        <dbReference type="EC" id="2.7.7.6"/>
    </reaction>
</comment>
<comment type="subunit">
    <text evidence="1">The RNAP catalytic core consists of 2 alpha, 1 beta, 1 beta' and 1 omega subunit. When a sigma factor is associated with the core the holoenzyme is formed, which can initiate transcription.</text>
</comment>
<comment type="similarity">
    <text evidence="1">Belongs to the RNA polymerase beta chain family.</text>
</comment>
<sequence>MLNSQSGNRLRIDFSNVPQQIDIPNLLQLQKKSFDYFLNIDAKNSESGIEKVFKSIFPIHDPQNRLSLEYVSSEVGKPKYTIRECMERGLTYSVNLKMKIRLTLHEKDEKTGEKIGIKDIKEQEIYIREIPLMTDRISFIINGVERVVVNQLHRSPGVIFKEEESSTVANKLVYTAQIIPDRGSWLYFEYDAKDVLYVRINKRRKVPITILFRALGYKKQDIIKLFYPIQTIHVKKDKFLTEFNPNDFLDRVEYDLKDEKGNIIHQAGKRMTKKKAEQLVKDGIKWVEYPVEILTNRYLANPIINKETGEVLFDSLTLLDESKLAKIKEQKTFDIANDLANGVDAAIINSFIQDNETLKLLKQTENIDDENDLAAIRIYKVMRPGEPVVKDAAKAFVNDLFFNPERYDLTKVGRMKMNHKLGLDTPEYVTVLTNEDIVKTAKYLIKVKNGRGHIDDRDHLGNRRIRSIGELLANELHVGLAKMQKAIRDKFTALNTDIDKVMPYDLINPKTITVTIMEFFTGGQLSQFMDQTNPLSEVTHKRRLSALGEGGLVKERAGFEVRDVHATHYGRICPVETPEGQNIGLINTLSTYAKVNDLGFVEAPYKKVENGKVSNEIVYLTATQEEGLVIAAASTKIDEKGSIVEEFVEARQDGETILARREEVHLIDLCSGMIVGVAASLIPFLEHDDANRALMGSNMQRQAVPLLTAQAPIVGTGMEKIIARDAWEAIKAKRAGIVEKVDNKNIFILGEDENGPFIDHYKMEKNLRTNQNTTFTQHPIVKKGEFVQVGQIIADGPSMDQGELAIGKNALIAFMPWHGYNYEDAIVISEKILREDTFTSVHIYEKEVEARELKDGVEEITKDIPNVKEDDLAHLDESGIAKIGTHIKPGMILVGKVSPKGEVKPTPEERLLRAIFGEKAGHVVNKSLYATASMEGVVVDVKIFTKKGYEKDARAIKAYDEEKLNLEKEHHDRLLMMDREETLRVCSLLSKSALNSDEEINGQKYKKGAKVDIKELEKINRFALNSLVKAYSKDVQKEYEDLKNHFQNEKKKLKSEHDEKLEILEKDDILPSGVVKLVKVYIATKRKLKVGDKMAGRHGNKGIVSNIVPEVDMPYLPDGRPIDIALNPLGVPSRMNIGQILESHLGIVGMRLGDQIQEIFDKKQKDFIKQLRTKILEICSVSRLTLEKKFVESLNDEQLISYARDWARGVKFATPVFEGVTVEEFSKLFEMAKIAMDGKSELYDGRTGEKMAERVHVGCMYMLKLHHLVDEKVHARSTGPYSLVTQQPVGGKALFGGQRFGEMEVWALEAYGAAHTLREMLTIKSDDVEGRFSAYKALTKGENVPATGIPETFFVLTNELKSLALDVEIFDKDENNE</sequence>